<feature type="chain" id="PRO_1000192777" description="LexA repressor">
    <location>
        <begin position="1"/>
        <end position="206"/>
    </location>
</feature>
<feature type="DNA-binding region" description="H-T-H motif" evidence="1">
    <location>
        <begin position="28"/>
        <end position="48"/>
    </location>
</feature>
<feature type="active site" description="For autocatalytic cleavage activity" evidence="1">
    <location>
        <position position="123"/>
    </location>
</feature>
<feature type="active site" description="For autocatalytic cleavage activity" evidence="1">
    <location>
        <position position="160"/>
    </location>
</feature>
<feature type="site" description="Cleavage; by autolysis" evidence="1">
    <location>
        <begin position="88"/>
        <end position="89"/>
    </location>
</feature>
<gene>
    <name evidence="1" type="primary">lexA</name>
    <name type="ordered locus">swp_4821</name>
</gene>
<protein>
    <recommendedName>
        <fullName evidence="1">LexA repressor</fullName>
        <ecNumber evidence="1">3.4.21.88</ecNumber>
    </recommendedName>
</protein>
<accession>B8CUX0</accession>
<sequence length="206" mass="22801">MRPLTPRQAEILELIKRNISDTGMPPTRAEIARRLGFKSANAAEEHLKALAKKGCIEIIPGTSRGIRLTQEEPEEVELGLPLIGQVAAGEPILAQEHVEQHYKVDPAMFRPSADFLLRVRGDSMKDIGILEGDLLAVHKSQQARNGQVVVARVEDDVTVKRFEKKGNKVFLHAENEEYSPIEVDLANQSLSIEGLAVGVIRNGDWQ</sequence>
<keyword id="KW-0068">Autocatalytic cleavage</keyword>
<keyword id="KW-0227">DNA damage</keyword>
<keyword id="KW-0234">DNA repair</keyword>
<keyword id="KW-0235">DNA replication</keyword>
<keyword id="KW-0238">DNA-binding</keyword>
<keyword id="KW-0378">Hydrolase</keyword>
<keyword id="KW-0678">Repressor</keyword>
<keyword id="KW-0742">SOS response</keyword>
<keyword id="KW-0804">Transcription</keyword>
<keyword id="KW-0805">Transcription regulation</keyword>
<proteinExistence type="inferred from homology"/>
<evidence type="ECO:0000255" key="1">
    <source>
        <dbReference type="HAMAP-Rule" id="MF_00015"/>
    </source>
</evidence>
<comment type="function">
    <text evidence="1">Represses a number of genes involved in the response to DNA damage (SOS response), including recA and lexA. In the presence of single-stranded DNA, RecA interacts with LexA causing an autocatalytic cleavage which disrupts the DNA-binding part of LexA, leading to derepression of the SOS regulon and eventually DNA repair.</text>
</comment>
<comment type="catalytic activity">
    <reaction evidence="1">
        <text>Hydrolysis of Ala-|-Gly bond in repressor LexA.</text>
        <dbReference type="EC" id="3.4.21.88"/>
    </reaction>
</comment>
<comment type="subunit">
    <text evidence="1">Homodimer.</text>
</comment>
<comment type="similarity">
    <text evidence="1">Belongs to the peptidase S24 family.</text>
</comment>
<name>LEXA_SHEPW</name>
<organism>
    <name type="scientific">Shewanella piezotolerans (strain WP3 / JCM 13877)</name>
    <dbReference type="NCBI Taxonomy" id="225849"/>
    <lineage>
        <taxon>Bacteria</taxon>
        <taxon>Pseudomonadati</taxon>
        <taxon>Pseudomonadota</taxon>
        <taxon>Gammaproteobacteria</taxon>
        <taxon>Alteromonadales</taxon>
        <taxon>Shewanellaceae</taxon>
        <taxon>Shewanella</taxon>
    </lineage>
</organism>
<reference key="1">
    <citation type="journal article" date="2008" name="PLoS ONE">
        <title>Environmental adaptation: genomic analysis of the piezotolerant and psychrotolerant deep-sea iron reducing bacterium Shewanella piezotolerans WP3.</title>
        <authorList>
            <person name="Wang F."/>
            <person name="Wang J."/>
            <person name="Jian H."/>
            <person name="Zhang B."/>
            <person name="Li S."/>
            <person name="Wang F."/>
            <person name="Zeng X."/>
            <person name="Gao L."/>
            <person name="Bartlett D.H."/>
            <person name="Yu J."/>
            <person name="Hu S."/>
            <person name="Xiao X."/>
        </authorList>
    </citation>
    <scope>NUCLEOTIDE SEQUENCE [LARGE SCALE GENOMIC DNA]</scope>
    <source>
        <strain>WP3 / JCM 13877</strain>
    </source>
</reference>
<dbReference type="EC" id="3.4.21.88" evidence="1"/>
<dbReference type="EMBL" id="CP000472">
    <property type="protein sequence ID" value="ACJ31446.1"/>
    <property type="molecule type" value="Genomic_DNA"/>
</dbReference>
<dbReference type="RefSeq" id="WP_020914776.1">
    <property type="nucleotide sequence ID" value="NC_011566.1"/>
</dbReference>
<dbReference type="SMR" id="B8CUX0"/>
<dbReference type="STRING" id="225849.swp_4821"/>
<dbReference type="MEROPS" id="S24.001"/>
<dbReference type="KEGG" id="swp:swp_4821"/>
<dbReference type="eggNOG" id="COG1974">
    <property type="taxonomic scope" value="Bacteria"/>
</dbReference>
<dbReference type="HOGENOM" id="CLU_066192_45_3_6"/>
<dbReference type="OrthoDB" id="9802364at2"/>
<dbReference type="BRENDA" id="3.4.21.88">
    <property type="organism ID" value="12546"/>
</dbReference>
<dbReference type="Proteomes" id="UP000000753">
    <property type="component" value="Chromosome"/>
</dbReference>
<dbReference type="GO" id="GO:0003677">
    <property type="term" value="F:DNA binding"/>
    <property type="evidence" value="ECO:0007669"/>
    <property type="project" value="UniProtKB-UniRule"/>
</dbReference>
<dbReference type="GO" id="GO:0004252">
    <property type="term" value="F:serine-type endopeptidase activity"/>
    <property type="evidence" value="ECO:0007669"/>
    <property type="project" value="UniProtKB-UniRule"/>
</dbReference>
<dbReference type="GO" id="GO:0006281">
    <property type="term" value="P:DNA repair"/>
    <property type="evidence" value="ECO:0007669"/>
    <property type="project" value="UniProtKB-UniRule"/>
</dbReference>
<dbReference type="GO" id="GO:0006260">
    <property type="term" value="P:DNA replication"/>
    <property type="evidence" value="ECO:0007669"/>
    <property type="project" value="UniProtKB-UniRule"/>
</dbReference>
<dbReference type="GO" id="GO:0045892">
    <property type="term" value="P:negative regulation of DNA-templated transcription"/>
    <property type="evidence" value="ECO:0007669"/>
    <property type="project" value="UniProtKB-UniRule"/>
</dbReference>
<dbReference type="GO" id="GO:0006508">
    <property type="term" value="P:proteolysis"/>
    <property type="evidence" value="ECO:0007669"/>
    <property type="project" value="InterPro"/>
</dbReference>
<dbReference type="GO" id="GO:0009432">
    <property type="term" value="P:SOS response"/>
    <property type="evidence" value="ECO:0007669"/>
    <property type="project" value="UniProtKB-UniRule"/>
</dbReference>
<dbReference type="CDD" id="cd06529">
    <property type="entry name" value="S24_LexA-like"/>
    <property type="match status" value="1"/>
</dbReference>
<dbReference type="FunFam" id="1.10.10.10:FF:000009">
    <property type="entry name" value="LexA repressor"/>
    <property type="match status" value="1"/>
</dbReference>
<dbReference type="FunFam" id="2.10.109.10:FF:000001">
    <property type="entry name" value="LexA repressor"/>
    <property type="match status" value="1"/>
</dbReference>
<dbReference type="Gene3D" id="2.10.109.10">
    <property type="entry name" value="Umud Fragment, subunit A"/>
    <property type="match status" value="1"/>
</dbReference>
<dbReference type="Gene3D" id="1.10.10.10">
    <property type="entry name" value="Winged helix-like DNA-binding domain superfamily/Winged helix DNA-binding domain"/>
    <property type="match status" value="1"/>
</dbReference>
<dbReference type="HAMAP" id="MF_00015">
    <property type="entry name" value="LexA"/>
    <property type="match status" value="1"/>
</dbReference>
<dbReference type="InterPro" id="IPR006200">
    <property type="entry name" value="LexA"/>
</dbReference>
<dbReference type="InterPro" id="IPR039418">
    <property type="entry name" value="LexA-like"/>
</dbReference>
<dbReference type="InterPro" id="IPR036286">
    <property type="entry name" value="LexA/Signal_pep-like_sf"/>
</dbReference>
<dbReference type="InterPro" id="IPR006199">
    <property type="entry name" value="LexA_DNA-bd_dom"/>
</dbReference>
<dbReference type="InterPro" id="IPR050077">
    <property type="entry name" value="LexA_repressor"/>
</dbReference>
<dbReference type="InterPro" id="IPR006197">
    <property type="entry name" value="Peptidase_S24_LexA"/>
</dbReference>
<dbReference type="InterPro" id="IPR015927">
    <property type="entry name" value="Peptidase_S24_S26A/B/C"/>
</dbReference>
<dbReference type="InterPro" id="IPR036388">
    <property type="entry name" value="WH-like_DNA-bd_sf"/>
</dbReference>
<dbReference type="InterPro" id="IPR036390">
    <property type="entry name" value="WH_DNA-bd_sf"/>
</dbReference>
<dbReference type="NCBIfam" id="TIGR00498">
    <property type="entry name" value="lexA"/>
    <property type="match status" value="1"/>
</dbReference>
<dbReference type="PANTHER" id="PTHR33516">
    <property type="entry name" value="LEXA REPRESSOR"/>
    <property type="match status" value="1"/>
</dbReference>
<dbReference type="PANTHER" id="PTHR33516:SF2">
    <property type="entry name" value="LEXA REPRESSOR-RELATED"/>
    <property type="match status" value="1"/>
</dbReference>
<dbReference type="Pfam" id="PF01726">
    <property type="entry name" value="LexA_DNA_bind"/>
    <property type="match status" value="1"/>
</dbReference>
<dbReference type="Pfam" id="PF00717">
    <property type="entry name" value="Peptidase_S24"/>
    <property type="match status" value="1"/>
</dbReference>
<dbReference type="PRINTS" id="PR00726">
    <property type="entry name" value="LEXASERPTASE"/>
</dbReference>
<dbReference type="SUPFAM" id="SSF51306">
    <property type="entry name" value="LexA/Signal peptidase"/>
    <property type="match status" value="1"/>
</dbReference>
<dbReference type="SUPFAM" id="SSF46785">
    <property type="entry name" value="Winged helix' DNA-binding domain"/>
    <property type="match status" value="1"/>
</dbReference>